<comment type="function">
    <text evidence="1">Translocates 4-amino-4-deoxy-L-arabinose-phosphoundecaprenol (alpha-L-Ara4N-phosphoundecaprenol) from the cytoplasmic to the periplasmic side of the inner membrane.</text>
</comment>
<comment type="pathway">
    <text evidence="1">Bacterial outer membrane biogenesis; lipopolysaccharide biosynthesis.</text>
</comment>
<comment type="subunit">
    <text evidence="1">Heterodimer of ArnE and ArnF.</text>
</comment>
<comment type="subcellular location">
    <subcellularLocation>
        <location evidence="1">Cell inner membrane</location>
        <topology evidence="1">Multi-pass membrane protein</topology>
    </subcellularLocation>
</comment>
<comment type="similarity">
    <text evidence="1">Belongs to the ArnE family.</text>
</comment>
<name>ARNE_PSEAE</name>
<gene>
    <name evidence="1" type="primary">arnE</name>
    <name type="ordered locus">PA3557</name>
</gene>
<feature type="chain" id="PRO_0000382981" description="Probable 4-amino-4-deoxy-L-arabinose-phosphoundecaprenol flippase subunit ArnE">
    <location>
        <begin position="1"/>
        <end position="115"/>
    </location>
</feature>
<feature type="transmembrane region" description="Helical" evidence="1">
    <location>
        <begin position="42"/>
        <end position="62"/>
    </location>
</feature>
<feature type="transmembrane region" description="Helical" evidence="1">
    <location>
        <begin position="65"/>
        <end position="85"/>
    </location>
</feature>
<feature type="transmembrane region" description="Helical" evidence="1">
    <location>
        <begin position="93"/>
        <end position="112"/>
    </location>
</feature>
<feature type="domain" description="EamA" evidence="1">
    <location>
        <begin position="46"/>
        <end position="113"/>
    </location>
</feature>
<protein>
    <recommendedName>
        <fullName evidence="1">Probable 4-amino-4-deoxy-L-arabinose-phosphoundecaprenol flippase subunit ArnE</fullName>
        <shortName evidence="1">L-Ara4N-phosphoundecaprenol flippase subunit ArnE</shortName>
    </recommendedName>
    <alternativeName>
        <fullName evidence="1">Undecaprenyl phosphate-aminoarabinose flippase subunit ArnE</fullName>
    </alternativeName>
</protein>
<evidence type="ECO:0000255" key="1">
    <source>
        <dbReference type="HAMAP-Rule" id="MF_01869"/>
    </source>
</evidence>
<accession>Q9HY60</accession>
<reference key="1">
    <citation type="journal article" date="2000" name="Nature">
        <title>Complete genome sequence of Pseudomonas aeruginosa PAO1, an opportunistic pathogen.</title>
        <authorList>
            <person name="Stover C.K."/>
            <person name="Pham X.-Q.T."/>
            <person name="Erwin A.L."/>
            <person name="Mizoguchi S.D."/>
            <person name="Warrener P."/>
            <person name="Hickey M.J."/>
            <person name="Brinkman F.S.L."/>
            <person name="Hufnagle W.O."/>
            <person name="Kowalik D.J."/>
            <person name="Lagrou M."/>
            <person name="Garber R.L."/>
            <person name="Goltry L."/>
            <person name="Tolentino E."/>
            <person name="Westbrock-Wadman S."/>
            <person name="Yuan Y."/>
            <person name="Brody L.L."/>
            <person name="Coulter S.N."/>
            <person name="Folger K.R."/>
            <person name="Kas A."/>
            <person name="Larbig K."/>
            <person name="Lim R.M."/>
            <person name="Smith K.A."/>
            <person name="Spencer D.H."/>
            <person name="Wong G.K.-S."/>
            <person name="Wu Z."/>
            <person name="Paulsen I.T."/>
            <person name="Reizer J."/>
            <person name="Saier M.H. Jr."/>
            <person name="Hancock R.E.W."/>
            <person name="Lory S."/>
            <person name="Olson M.V."/>
        </authorList>
    </citation>
    <scope>NUCLEOTIDE SEQUENCE [LARGE SCALE GENOMIC DNA]</scope>
    <source>
        <strain>ATCC 15692 / DSM 22644 / CIP 104116 / JCM 14847 / LMG 12228 / 1C / PRS 101 / PAO1</strain>
    </source>
</reference>
<proteinExistence type="inferred from homology"/>
<dbReference type="EMBL" id="AE004091">
    <property type="protein sequence ID" value="AAG06945.1"/>
    <property type="molecule type" value="Genomic_DNA"/>
</dbReference>
<dbReference type="PIR" id="H83201">
    <property type="entry name" value="H83201"/>
</dbReference>
<dbReference type="RefSeq" id="NP_252247.1">
    <property type="nucleotide sequence ID" value="NC_002516.2"/>
</dbReference>
<dbReference type="RefSeq" id="WP_003112876.1">
    <property type="nucleotide sequence ID" value="NZ_QZGE01000001.1"/>
</dbReference>
<dbReference type="SMR" id="Q9HY60"/>
<dbReference type="FunCoup" id="Q9HY60">
    <property type="interactions" value="88"/>
</dbReference>
<dbReference type="STRING" id="208964.PA3557"/>
<dbReference type="PaxDb" id="208964-PA3557"/>
<dbReference type="DNASU" id="879132"/>
<dbReference type="GeneID" id="879132"/>
<dbReference type="KEGG" id="pae:PA3557"/>
<dbReference type="PATRIC" id="fig|208964.12.peg.3722"/>
<dbReference type="PseudoCAP" id="PA3557"/>
<dbReference type="HOGENOM" id="CLU_131462_5_1_6"/>
<dbReference type="InParanoid" id="Q9HY60"/>
<dbReference type="OrthoDB" id="6058674at2"/>
<dbReference type="BioCyc" id="PAER208964:G1FZ6-3625-MONOMER"/>
<dbReference type="UniPathway" id="UPA00030"/>
<dbReference type="Proteomes" id="UP000002438">
    <property type="component" value="Chromosome"/>
</dbReference>
<dbReference type="GO" id="GO:0005886">
    <property type="term" value="C:plasma membrane"/>
    <property type="evidence" value="ECO:0000318"/>
    <property type="project" value="GO_Central"/>
</dbReference>
<dbReference type="GO" id="GO:1901505">
    <property type="term" value="F:carbohydrate derivative transmembrane transporter activity"/>
    <property type="evidence" value="ECO:0007669"/>
    <property type="project" value="InterPro"/>
</dbReference>
<dbReference type="GO" id="GO:0022857">
    <property type="term" value="F:transmembrane transporter activity"/>
    <property type="evidence" value="ECO:0000318"/>
    <property type="project" value="GO_Central"/>
</dbReference>
<dbReference type="GO" id="GO:0009245">
    <property type="term" value="P:lipid A biosynthetic process"/>
    <property type="evidence" value="ECO:0007669"/>
    <property type="project" value="UniProtKB-UniRule"/>
</dbReference>
<dbReference type="GO" id="GO:0009103">
    <property type="term" value="P:lipopolysaccharide biosynthetic process"/>
    <property type="evidence" value="ECO:0007669"/>
    <property type="project" value="UniProtKB-UniRule"/>
</dbReference>
<dbReference type="GO" id="GO:0055085">
    <property type="term" value="P:transmembrane transport"/>
    <property type="evidence" value="ECO:0000318"/>
    <property type="project" value="GO_Central"/>
</dbReference>
<dbReference type="FunFam" id="1.10.3730.20:FF:000002">
    <property type="entry name" value="Probable 4-amino-4-deoxy-L-arabinose-phosphoundecaprenol flippase subunit ArnE"/>
    <property type="match status" value="1"/>
</dbReference>
<dbReference type="Gene3D" id="1.10.3730.20">
    <property type="match status" value="1"/>
</dbReference>
<dbReference type="HAMAP" id="MF_01869">
    <property type="entry name" value="Flippase_ArnE"/>
    <property type="match status" value="1"/>
</dbReference>
<dbReference type="InterPro" id="IPR000620">
    <property type="entry name" value="EamA_dom"/>
</dbReference>
<dbReference type="InterPro" id="IPR022883">
    <property type="entry name" value="Flippase_ArnE"/>
</dbReference>
<dbReference type="InterPro" id="IPR000390">
    <property type="entry name" value="Small_drug/metabolite_transptr"/>
</dbReference>
<dbReference type="PANTHER" id="PTHR30561:SF23">
    <property type="entry name" value="4-AMINO-4-DEOXY-L-ARABINOSE-PHOSPHOUNDECAPRENOL FLIPPASE SUBUNIT ARNE-RELATED"/>
    <property type="match status" value="1"/>
</dbReference>
<dbReference type="PANTHER" id="PTHR30561">
    <property type="entry name" value="SMR FAMILY PROTON-DEPENDENT DRUG EFFLUX TRANSPORTER SUGE"/>
    <property type="match status" value="1"/>
</dbReference>
<dbReference type="Pfam" id="PF00892">
    <property type="entry name" value="EamA"/>
    <property type="match status" value="1"/>
</dbReference>
<dbReference type="SUPFAM" id="SSF103481">
    <property type="entry name" value="Multidrug resistance efflux transporter EmrE"/>
    <property type="match status" value="1"/>
</dbReference>
<sequence length="115" mass="12496">MSAALLLATLLMTGLGQVAQKLTVEHWRLVAADGWTARLRSPWPWLALLALGLGLLCWLLLLQRVEVGSAYPMLALNFVLVTLAARFVFDEPVDRRHLAGLLLIVAGVALLGRSA</sequence>
<organism>
    <name type="scientific">Pseudomonas aeruginosa (strain ATCC 15692 / DSM 22644 / CIP 104116 / JCM 14847 / LMG 12228 / 1C / PRS 101 / PAO1)</name>
    <dbReference type="NCBI Taxonomy" id="208964"/>
    <lineage>
        <taxon>Bacteria</taxon>
        <taxon>Pseudomonadati</taxon>
        <taxon>Pseudomonadota</taxon>
        <taxon>Gammaproteobacteria</taxon>
        <taxon>Pseudomonadales</taxon>
        <taxon>Pseudomonadaceae</taxon>
        <taxon>Pseudomonas</taxon>
    </lineage>
</organism>
<keyword id="KW-0997">Cell inner membrane</keyword>
<keyword id="KW-1003">Cell membrane</keyword>
<keyword id="KW-0441">Lipid A biosynthesis</keyword>
<keyword id="KW-0444">Lipid biosynthesis</keyword>
<keyword id="KW-0443">Lipid metabolism</keyword>
<keyword id="KW-0448">Lipopolysaccharide biosynthesis</keyword>
<keyword id="KW-0472">Membrane</keyword>
<keyword id="KW-1185">Reference proteome</keyword>
<keyword id="KW-0812">Transmembrane</keyword>
<keyword id="KW-1133">Transmembrane helix</keyword>
<keyword id="KW-0813">Transport</keyword>